<dbReference type="EC" id="2.7.7.56" evidence="1"/>
<dbReference type="EMBL" id="CP000115">
    <property type="protein sequence ID" value="ABA03461.1"/>
    <property type="molecule type" value="Genomic_DNA"/>
</dbReference>
<dbReference type="RefSeq" id="WP_011313529.1">
    <property type="nucleotide sequence ID" value="NC_007406.1"/>
</dbReference>
<dbReference type="SMR" id="Q3SW80"/>
<dbReference type="STRING" id="323098.Nwi_0193"/>
<dbReference type="KEGG" id="nwi:Nwi_0193"/>
<dbReference type="eggNOG" id="COG0689">
    <property type="taxonomic scope" value="Bacteria"/>
</dbReference>
<dbReference type="HOGENOM" id="CLU_050858_0_0_5"/>
<dbReference type="OrthoDB" id="9802265at2"/>
<dbReference type="Proteomes" id="UP000002531">
    <property type="component" value="Chromosome"/>
</dbReference>
<dbReference type="GO" id="GO:0000175">
    <property type="term" value="F:3'-5'-RNA exonuclease activity"/>
    <property type="evidence" value="ECO:0007669"/>
    <property type="project" value="UniProtKB-UniRule"/>
</dbReference>
<dbReference type="GO" id="GO:0000049">
    <property type="term" value="F:tRNA binding"/>
    <property type="evidence" value="ECO:0007669"/>
    <property type="project" value="UniProtKB-UniRule"/>
</dbReference>
<dbReference type="GO" id="GO:0009022">
    <property type="term" value="F:tRNA nucleotidyltransferase activity"/>
    <property type="evidence" value="ECO:0007669"/>
    <property type="project" value="UniProtKB-UniRule"/>
</dbReference>
<dbReference type="GO" id="GO:0016075">
    <property type="term" value="P:rRNA catabolic process"/>
    <property type="evidence" value="ECO:0007669"/>
    <property type="project" value="UniProtKB-UniRule"/>
</dbReference>
<dbReference type="GO" id="GO:0006364">
    <property type="term" value="P:rRNA processing"/>
    <property type="evidence" value="ECO:0007669"/>
    <property type="project" value="UniProtKB-KW"/>
</dbReference>
<dbReference type="GO" id="GO:0008033">
    <property type="term" value="P:tRNA processing"/>
    <property type="evidence" value="ECO:0007669"/>
    <property type="project" value="UniProtKB-UniRule"/>
</dbReference>
<dbReference type="CDD" id="cd11362">
    <property type="entry name" value="RNase_PH_bact"/>
    <property type="match status" value="1"/>
</dbReference>
<dbReference type="FunFam" id="3.30.230.70:FF:000003">
    <property type="entry name" value="Ribonuclease PH"/>
    <property type="match status" value="1"/>
</dbReference>
<dbReference type="Gene3D" id="3.30.230.70">
    <property type="entry name" value="GHMP Kinase, N-terminal domain"/>
    <property type="match status" value="1"/>
</dbReference>
<dbReference type="HAMAP" id="MF_00564">
    <property type="entry name" value="RNase_PH"/>
    <property type="match status" value="1"/>
</dbReference>
<dbReference type="InterPro" id="IPR001247">
    <property type="entry name" value="ExoRNase_PH_dom1"/>
</dbReference>
<dbReference type="InterPro" id="IPR015847">
    <property type="entry name" value="ExoRNase_PH_dom2"/>
</dbReference>
<dbReference type="InterPro" id="IPR036345">
    <property type="entry name" value="ExoRNase_PH_dom2_sf"/>
</dbReference>
<dbReference type="InterPro" id="IPR027408">
    <property type="entry name" value="PNPase/RNase_PH_dom_sf"/>
</dbReference>
<dbReference type="InterPro" id="IPR020568">
    <property type="entry name" value="Ribosomal_Su5_D2-typ_SF"/>
</dbReference>
<dbReference type="InterPro" id="IPR050080">
    <property type="entry name" value="RNase_PH"/>
</dbReference>
<dbReference type="InterPro" id="IPR002381">
    <property type="entry name" value="RNase_PH_bac-type"/>
</dbReference>
<dbReference type="InterPro" id="IPR018336">
    <property type="entry name" value="RNase_PH_CS"/>
</dbReference>
<dbReference type="NCBIfam" id="TIGR01966">
    <property type="entry name" value="RNasePH"/>
    <property type="match status" value="1"/>
</dbReference>
<dbReference type="PANTHER" id="PTHR11953">
    <property type="entry name" value="EXOSOME COMPLEX COMPONENT"/>
    <property type="match status" value="1"/>
</dbReference>
<dbReference type="PANTHER" id="PTHR11953:SF0">
    <property type="entry name" value="EXOSOME COMPLEX COMPONENT RRP41"/>
    <property type="match status" value="1"/>
</dbReference>
<dbReference type="Pfam" id="PF01138">
    <property type="entry name" value="RNase_PH"/>
    <property type="match status" value="1"/>
</dbReference>
<dbReference type="Pfam" id="PF03725">
    <property type="entry name" value="RNase_PH_C"/>
    <property type="match status" value="1"/>
</dbReference>
<dbReference type="SUPFAM" id="SSF55666">
    <property type="entry name" value="Ribonuclease PH domain 2-like"/>
    <property type="match status" value="1"/>
</dbReference>
<dbReference type="SUPFAM" id="SSF54211">
    <property type="entry name" value="Ribosomal protein S5 domain 2-like"/>
    <property type="match status" value="1"/>
</dbReference>
<dbReference type="PROSITE" id="PS01277">
    <property type="entry name" value="RIBONUCLEASE_PH"/>
    <property type="match status" value="1"/>
</dbReference>
<keyword id="KW-0548">Nucleotidyltransferase</keyword>
<keyword id="KW-1185">Reference proteome</keyword>
<keyword id="KW-0694">RNA-binding</keyword>
<keyword id="KW-0698">rRNA processing</keyword>
<keyword id="KW-0808">Transferase</keyword>
<keyword id="KW-0819">tRNA processing</keyword>
<keyword id="KW-0820">tRNA-binding</keyword>
<sequence>MRPSRRAPDELRAVSLERGVVKYAEGSCLVKFGDTHVLVTATLEERLPPWLKGQGRGWVTAEYGMLPRATLERTRREASAGKQGGRTVEIQRLIGRSLRAAVDLEALGERQITIDCDVIQADGGTRTASITGAWVALADCVNWMKARNMLKAGVLRGNVAAISCGIYNGTPVLDLDYAEDSEADTDANFVMTGEGRIIEVQGTAEKVPFSDDEFLALMALAKKGVARLVDLQKMAVA</sequence>
<organism>
    <name type="scientific">Nitrobacter winogradskyi (strain ATCC 25391 / DSM 10237 / CIP 104748 / NCIMB 11846 / Nb-255)</name>
    <dbReference type="NCBI Taxonomy" id="323098"/>
    <lineage>
        <taxon>Bacteria</taxon>
        <taxon>Pseudomonadati</taxon>
        <taxon>Pseudomonadota</taxon>
        <taxon>Alphaproteobacteria</taxon>
        <taxon>Hyphomicrobiales</taxon>
        <taxon>Nitrobacteraceae</taxon>
        <taxon>Nitrobacter</taxon>
    </lineage>
</organism>
<proteinExistence type="inferred from homology"/>
<gene>
    <name evidence="1" type="primary">rph</name>
    <name type="ordered locus">Nwi_0193</name>
</gene>
<comment type="function">
    <text evidence="1">Phosphorolytic 3'-5' exoribonuclease that plays an important role in tRNA 3'-end maturation. Removes nucleotide residues following the 3'-CCA terminus of tRNAs; can also add nucleotides to the ends of RNA molecules by using nucleoside diphosphates as substrates, but this may not be physiologically important. Probably plays a role in initiation of 16S rRNA degradation (leading to ribosome degradation) during starvation.</text>
</comment>
<comment type="catalytic activity">
    <reaction evidence="1">
        <text>tRNA(n+1) + phosphate = tRNA(n) + a ribonucleoside 5'-diphosphate</text>
        <dbReference type="Rhea" id="RHEA:10628"/>
        <dbReference type="Rhea" id="RHEA-COMP:17343"/>
        <dbReference type="Rhea" id="RHEA-COMP:17344"/>
        <dbReference type="ChEBI" id="CHEBI:43474"/>
        <dbReference type="ChEBI" id="CHEBI:57930"/>
        <dbReference type="ChEBI" id="CHEBI:173114"/>
        <dbReference type="EC" id="2.7.7.56"/>
    </reaction>
</comment>
<comment type="subunit">
    <text evidence="1">Homohexameric ring arranged as a trimer of dimers.</text>
</comment>
<comment type="similarity">
    <text evidence="1">Belongs to the RNase PH family.</text>
</comment>
<name>RNPH_NITWN</name>
<reference key="1">
    <citation type="journal article" date="2006" name="Appl. Environ. Microbiol.">
        <title>Genome sequence of the chemolithoautotrophic nitrite-oxidizing bacterium Nitrobacter winogradskyi Nb-255.</title>
        <authorList>
            <person name="Starkenburg S.R."/>
            <person name="Chain P.S.G."/>
            <person name="Sayavedra-Soto L.A."/>
            <person name="Hauser L."/>
            <person name="Land M.L."/>
            <person name="Larimer F.W."/>
            <person name="Malfatti S.A."/>
            <person name="Klotz M.G."/>
            <person name="Bottomley P.J."/>
            <person name="Arp D.J."/>
            <person name="Hickey W.J."/>
        </authorList>
    </citation>
    <scope>NUCLEOTIDE SEQUENCE [LARGE SCALE GENOMIC DNA]</scope>
    <source>
        <strain>ATCC 25391 / DSM 10237 / CIP 104748 / NCIMB 11846 / Nb-255</strain>
    </source>
</reference>
<accession>Q3SW80</accession>
<feature type="chain" id="PRO_1000024843" description="Ribonuclease PH">
    <location>
        <begin position="1"/>
        <end position="237"/>
    </location>
</feature>
<feature type="binding site" evidence="1">
    <location>
        <position position="86"/>
    </location>
    <ligand>
        <name>phosphate</name>
        <dbReference type="ChEBI" id="CHEBI:43474"/>
        <note>substrate</note>
    </ligand>
</feature>
<feature type="binding site" evidence="1">
    <location>
        <begin position="124"/>
        <end position="126"/>
    </location>
    <ligand>
        <name>phosphate</name>
        <dbReference type="ChEBI" id="CHEBI:43474"/>
        <note>substrate</note>
    </ligand>
</feature>
<protein>
    <recommendedName>
        <fullName evidence="1">Ribonuclease PH</fullName>
        <shortName evidence="1">RNase PH</shortName>
        <ecNumber evidence="1">2.7.7.56</ecNumber>
    </recommendedName>
    <alternativeName>
        <fullName evidence="1">tRNA nucleotidyltransferase</fullName>
    </alternativeName>
</protein>
<evidence type="ECO:0000255" key="1">
    <source>
        <dbReference type="HAMAP-Rule" id="MF_00564"/>
    </source>
</evidence>